<organism>
    <name type="scientific">Halalkalibacterium halodurans (strain ATCC BAA-125 / DSM 18197 / FERM 7344 / JCM 9153 / C-125)</name>
    <name type="common">Bacillus halodurans</name>
    <dbReference type="NCBI Taxonomy" id="272558"/>
    <lineage>
        <taxon>Bacteria</taxon>
        <taxon>Bacillati</taxon>
        <taxon>Bacillota</taxon>
        <taxon>Bacilli</taxon>
        <taxon>Bacillales</taxon>
        <taxon>Bacillaceae</taxon>
        <taxon>Halalkalibacterium (ex Joshi et al. 2022)</taxon>
    </lineage>
</organism>
<sequence>MESRIKVLVVDDSAFMRKVITSMLESDPRLEVVGTARNGEDALKKRKTLAPDVMTLDVEMPVMDGIETLKRLMSENPLPIIIVSSTTKEGAENALTAMELGAVDFITKPSGPISLDLEKVRDLLIEKVASAPNVKLKPTSKKAPVVFRPLQQPVPFDKTIIVIGTSTGGPKALKQVLTKLPKDLPAPILIVQHMPAGFTESLANRLNSLCEIHVKEAEDGEIIRPGVAYIAPGGYHLETKRLGTSIALHLTKEEPRKGHRPSVDVLFESVSALSSIYKVAVIMTGMGSDGTEGLEQLKRGSCYAIAESEQSCVVFGMPKVAIERKLVDEVTHLELIADSIVRQCKR</sequence>
<reference key="1">
    <citation type="journal article" date="2000" name="Nucleic Acids Res.">
        <title>Complete genome sequence of the alkaliphilic bacterium Bacillus halodurans and genomic sequence comparison with Bacillus subtilis.</title>
        <authorList>
            <person name="Takami H."/>
            <person name="Nakasone K."/>
            <person name="Takaki Y."/>
            <person name="Maeno G."/>
            <person name="Sasaki R."/>
            <person name="Masui N."/>
            <person name="Fuji F."/>
            <person name="Hirama C."/>
            <person name="Nakamura Y."/>
            <person name="Ogasawara N."/>
            <person name="Kuhara S."/>
            <person name="Horikoshi K."/>
        </authorList>
    </citation>
    <scope>NUCLEOTIDE SEQUENCE [LARGE SCALE GENOMIC DNA]</scope>
    <source>
        <strain>ATCC BAA-125 / DSM 18197 / FERM 7344 / JCM 9153 / C-125</strain>
    </source>
</reference>
<gene>
    <name evidence="1" type="primary">cheB</name>
    <name type="ordered locus">BH2435</name>
</gene>
<name>CHEB_HALH5</name>
<proteinExistence type="inferred from homology"/>
<evidence type="ECO:0000255" key="1">
    <source>
        <dbReference type="HAMAP-Rule" id="MF_00099"/>
    </source>
</evidence>
<protein>
    <recommendedName>
        <fullName evidence="1">Protein-glutamate methylesterase/protein-glutamine glutaminase</fullName>
        <ecNumber evidence="1">3.1.1.61</ecNumber>
        <ecNumber evidence="1">3.5.1.44</ecNumber>
    </recommendedName>
</protein>
<keyword id="KW-0145">Chemotaxis</keyword>
<keyword id="KW-0963">Cytoplasm</keyword>
<keyword id="KW-0378">Hydrolase</keyword>
<keyword id="KW-0597">Phosphoprotein</keyword>
<keyword id="KW-1185">Reference proteome</keyword>
<feature type="chain" id="PRO_0000157975" description="Protein-glutamate methylesterase/protein-glutamine glutaminase">
    <location>
        <begin position="1"/>
        <end position="346"/>
    </location>
</feature>
<feature type="domain" description="Response regulatory" evidence="1">
    <location>
        <begin position="6"/>
        <end position="123"/>
    </location>
</feature>
<feature type="domain" description="CheB-type methylesterase" evidence="1">
    <location>
        <begin position="155"/>
        <end position="346"/>
    </location>
</feature>
<feature type="active site" evidence="1">
    <location>
        <position position="166"/>
    </location>
</feature>
<feature type="active site" evidence="1">
    <location>
        <position position="193"/>
    </location>
</feature>
<feature type="active site" evidence="1">
    <location>
        <position position="289"/>
    </location>
</feature>
<feature type="modified residue" description="4-aspartylphosphate" evidence="1">
    <location>
        <position position="57"/>
    </location>
</feature>
<accession>Q9KA55</accession>
<dbReference type="EC" id="3.1.1.61" evidence="1"/>
<dbReference type="EC" id="3.5.1.44" evidence="1"/>
<dbReference type="EMBL" id="BA000004">
    <property type="protein sequence ID" value="BAB06154.1"/>
    <property type="molecule type" value="Genomic_DNA"/>
</dbReference>
<dbReference type="PIR" id="C83954">
    <property type="entry name" value="C83954"/>
</dbReference>
<dbReference type="RefSeq" id="WP_010898588.1">
    <property type="nucleotide sequence ID" value="NC_002570.2"/>
</dbReference>
<dbReference type="SMR" id="Q9KA55"/>
<dbReference type="STRING" id="272558.gene:10728333"/>
<dbReference type="KEGG" id="bha:BH2435"/>
<dbReference type="eggNOG" id="COG2201">
    <property type="taxonomic scope" value="Bacteria"/>
</dbReference>
<dbReference type="HOGENOM" id="CLU_000445_51_0_9"/>
<dbReference type="OrthoDB" id="9793421at2"/>
<dbReference type="Proteomes" id="UP000001258">
    <property type="component" value="Chromosome"/>
</dbReference>
<dbReference type="GO" id="GO:0005737">
    <property type="term" value="C:cytoplasm"/>
    <property type="evidence" value="ECO:0007669"/>
    <property type="project" value="UniProtKB-SubCell"/>
</dbReference>
<dbReference type="GO" id="GO:0000156">
    <property type="term" value="F:phosphorelay response regulator activity"/>
    <property type="evidence" value="ECO:0007669"/>
    <property type="project" value="InterPro"/>
</dbReference>
<dbReference type="GO" id="GO:0008984">
    <property type="term" value="F:protein-glutamate methylesterase activity"/>
    <property type="evidence" value="ECO:0007669"/>
    <property type="project" value="UniProtKB-UniRule"/>
</dbReference>
<dbReference type="GO" id="GO:0050568">
    <property type="term" value="F:protein-glutamine glutaminase activity"/>
    <property type="evidence" value="ECO:0007669"/>
    <property type="project" value="UniProtKB-UniRule"/>
</dbReference>
<dbReference type="GO" id="GO:0006935">
    <property type="term" value="P:chemotaxis"/>
    <property type="evidence" value="ECO:0007669"/>
    <property type="project" value="UniProtKB-UniRule"/>
</dbReference>
<dbReference type="CDD" id="cd16432">
    <property type="entry name" value="CheB_Rec"/>
    <property type="match status" value="1"/>
</dbReference>
<dbReference type="CDD" id="cd17541">
    <property type="entry name" value="REC_CheB-like"/>
    <property type="match status" value="1"/>
</dbReference>
<dbReference type="Gene3D" id="3.40.50.2300">
    <property type="match status" value="1"/>
</dbReference>
<dbReference type="Gene3D" id="3.40.50.180">
    <property type="entry name" value="Methylesterase CheB, C-terminal domain"/>
    <property type="match status" value="1"/>
</dbReference>
<dbReference type="HAMAP" id="MF_00099">
    <property type="entry name" value="CheB_chemtxs"/>
    <property type="match status" value="1"/>
</dbReference>
<dbReference type="InterPro" id="IPR008248">
    <property type="entry name" value="CheB-like"/>
</dbReference>
<dbReference type="InterPro" id="IPR035909">
    <property type="entry name" value="CheB_C"/>
</dbReference>
<dbReference type="InterPro" id="IPR011006">
    <property type="entry name" value="CheY-like_superfamily"/>
</dbReference>
<dbReference type="InterPro" id="IPR000673">
    <property type="entry name" value="Sig_transdc_resp-reg_Me-estase"/>
</dbReference>
<dbReference type="InterPro" id="IPR001789">
    <property type="entry name" value="Sig_transdc_resp-reg_receiver"/>
</dbReference>
<dbReference type="NCBIfam" id="NF001965">
    <property type="entry name" value="PRK00742.1"/>
    <property type="match status" value="1"/>
</dbReference>
<dbReference type="NCBIfam" id="NF009206">
    <property type="entry name" value="PRK12555.1"/>
    <property type="match status" value="1"/>
</dbReference>
<dbReference type="PANTHER" id="PTHR42872">
    <property type="entry name" value="PROTEIN-GLUTAMATE METHYLESTERASE/PROTEIN-GLUTAMINE GLUTAMINASE"/>
    <property type="match status" value="1"/>
</dbReference>
<dbReference type="PANTHER" id="PTHR42872:SF3">
    <property type="entry name" value="PROTEIN-GLUTAMATE METHYLESTERASE_PROTEIN-GLUTAMINE GLUTAMINASE 1"/>
    <property type="match status" value="1"/>
</dbReference>
<dbReference type="Pfam" id="PF01339">
    <property type="entry name" value="CheB_methylest"/>
    <property type="match status" value="1"/>
</dbReference>
<dbReference type="Pfam" id="PF00072">
    <property type="entry name" value="Response_reg"/>
    <property type="match status" value="1"/>
</dbReference>
<dbReference type="PIRSF" id="PIRSF000876">
    <property type="entry name" value="RR_chemtxs_CheB"/>
    <property type="match status" value="1"/>
</dbReference>
<dbReference type="SMART" id="SM00448">
    <property type="entry name" value="REC"/>
    <property type="match status" value="1"/>
</dbReference>
<dbReference type="SUPFAM" id="SSF52172">
    <property type="entry name" value="CheY-like"/>
    <property type="match status" value="1"/>
</dbReference>
<dbReference type="SUPFAM" id="SSF52738">
    <property type="entry name" value="Methylesterase CheB, C-terminal domain"/>
    <property type="match status" value="1"/>
</dbReference>
<dbReference type="PROSITE" id="PS50122">
    <property type="entry name" value="CHEB"/>
    <property type="match status" value="1"/>
</dbReference>
<dbReference type="PROSITE" id="PS50110">
    <property type="entry name" value="RESPONSE_REGULATORY"/>
    <property type="match status" value="1"/>
</dbReference>
<comment type="function">
    <text evidence="1">Involved in chemotaxis. Part of a chemotaxis signal transduction system that modulates chemotaxis in response to various stimuli. Catalyzes the demethylation of specific methylglutamate residues introduced into the chemoreceptors (methyl-accepting chemotaxis proteins or MCP) by CheR. Also mediates the irreversible deamidation of specific glutamine residues to glutamic acid.</text>
</comment>
<comment type="catalytic activity">
    <reaction evidence="1">
        <text>[protein]-L-glutamate 5-O-methyl ester + H2O = L-glutamyl-[protein] + methanol + H(+)</text>
        <dbReference type="Rhea" id="RHEA:23236"/>
        <dbReference type="Rhea" id="RHEA-COMP:10208"/>
        <dbReference type="Rhea" id="RHEA-COMP:10311"/>
        <dbReference type="ChEBI" id="CHEBI:15377"/>
        <dbReference type="ChEBI" id="CHEBI:15378"/>
        <dbReference type="ChEBI" id="CHEBI:17790"/>
        <dbReference type="ChEBI" id="CHEBI:29973"/>
        <dbReference type="ChEBI" id="CHEBI:82795"/>
        <dbReference type="EC" id="3.1.1.61"/>
    </reaction>
</comment>
<comment type="catalytic activity">
    <reaction evidence="1">
        <text>L-glutaminyl-[protein] + H2O = L-glutamyl-[protein] + NH4(+)</text>
        <dbReference type="Rhea" id="RHEA:16441"/>
        <dbReference type="Rhea" id="RHEA-COMP:10207"/>
        <dbReference type="Rhea" id="RHEA-COMP:10208"/>
        <dbReference type="ChEBI" id="CHEBI:15377"/>
        <dbReference type="ChEBI" id="CHEBI:28938"/>
        <dbReference type="ChEBI" id="CHEBI:29973"/>
        <dbReference type="ChEBI" id="CHEBI:30011"/>
        <dbReference type="EC" id="3.5.1.44"/>
    </reaction>
</comment>
<comment type="subcellular location">
    <subcellularLocation>
        <location evidence="1">Cytoplasm</location>
    </subcellularLocation>
</comment>
<comment type="domain">
    <text evidence="1">Contains a C-terminal catalytic domain, and an N-terminal region which modulates catalytic activity.</text>
</comment>
<comment type="PTM">
    <text evidence="1">Phosphorylated by CheA. Phosphorylation of the N-terminal regulatory domain activates the methylesterase activity.</text>
</comment>
<comment type="similarity">
    <text evidence="1">Belongs to the CheB family.</text>
</comment>